<sequence>MSIEIARIKKSFGRTQVLNDISLDIPSGQMVALLGPSGSGKTTLLRIIAGLEHQSSGHIRFHGTDVSRLHARERKVGFVFQHYALFRHMTVFDNIAFGLTVLPRRDRPTAAAIKTKVTQLLEMVQLAHLADRFPAQLSGGQKQRVALARALAVEPQILLLDEPFGALDAQVRKELRRWLRQLHEELKFTSVFVTHDQEEATEVADRVVVMSQGNIEQADAPDRVWREPATRFVLEFMGEVNRLTGTVRGGQFHVGAHRWPLGYTPAYQGPVDLFLRPWEVDISRRTSLDSPLPVQVIEASPKGHYTQLVVQPLGWYHDPLTVVMAGEDVPVRGERLFVGLQKARLYNGDQRIETREEELALAQSA</sequence>
<comment type="function">
    <text evidence="1">Part of the ABC transporter complex CysAWTP involved in sulfate/thiosulfate import. Responsible for energy coupling to the transport system.</text>
</comment>
<comment type="catalytic activity">
    <reaction evidence="1">
        <text>sulfate(out) + ATP + H2O = sulfate(in) + ADP + phosphate + H(+)</text>
        <dbReference type="Rhea" id="RHEA:10192"/>
        <dbReference type="ChEBI" id="CHEBI:15377"/>
        <dbReference type="ChEBI" id="CHEBI:15378"/>
        <dbReference type="ChEBI" id="CHEBI:16189"/>
        <dbReference type="ChEBI" id="CHEBI:30616"/>
        <dbReference type="ChEBI" id="CHEBI:43474"/>
        <dbReference type="ChEBI" id="CHEBI:456216"/>
        <dbReference type="EC" id="7.3.2.3"/>
    </reaction>
</comment>
<comment type="catalytic activity">
    <reaction evidence="1">
        <text>thiosulfate(out) + ATP + H2O = thiosulfate(in) + ADP + phosphate + H(+)</text>
        <dbReference type="Rhea" id="RHEA:29871"/>
        <dbReference type="ChEBI" id="CHEBI:15377"/>
        <dbReference type="ChEBI" id="CHEBI:15378"/>
        <dbReference type="ChEBI" id="CHEBI:30616"/>
        <dbReference type="ChEBI" id="CHEBI:33542"/>
        <dbReference type="ChEBI" id="CHEBI:43474"/>
        <dbReference type="ChEBI" id="CHEBI:456216"/>
        <dbReference type="EC" id="7.3.2.3"/>
    </reaction>
</comment>
<comment type="subunit">
    <text evidence="1">The complex is composed of two ATP-binding proteins (CysA), two transmembrane proteins (CysT and CysW) and a solute-binding protein (CysP).</text>
</comment>
<comment type="subcellular location">
    <subcellularLocation>
        <location evidence="1">Cell inner membrane</location>
        <topology evidence="1">Peripheral membrane protein</topology>
    </subcellularLocation>
</comment>
<comment type="similarity">
    <text evidence="1">Belongs to the ABC transporter superfamily. Sulfate/tungstate importer (TC 3.A.1.6) family.</text>
</comment>
<organism>
    <name type="scientific">Salmonella typhimurium (strain LT2 / SGSC1412 / ATCC 700720)</name>
    <dbReference type="NCBI Taxonomy" id="99287"/>
    <lineage>
        <taxon>Bacteria</taxon>
        <taxon>Pseudomonadati</taxon>
        <taxon>Pseudomonadota</taxon>
        <taxon>Gammaproteobacteria</taxon>
        <taxon>Enterobacterales</taxon>
        <taxon>Enterobacteriaceae</taxon>
        <taxon>Salmonella</taxon>
    </lineage>
</organism>
<protein>
    <recommendedName>
        <fullName evidence="1">Sulfate/thiosulfate import ATP-binding protein CysA</fullName>
        <ecNumber evidence="1">7.3.2.3</ecNumber>
    </recommendedName>
    <alternativeName>
        <fullName evidence="1">Sulfate-transporting ATPase</fullName>
    </alternativeName>
</protein>
<keyword id="KW-0067">ATP-binding</keyword>
<keyword id="KW-0997">Cell inner membrane</keyword>
<keyword id="KW-1003">Cell membrane</keyword>
<keyword id="KW-0472">Membrane</keyword>
<keyword id="KW-0547">Nucleotide-binding</keyword>
<keyword id="KW-1185">Reference proteome</keyword>
<keyword id="KW-0764">Sulfate transport</keyword>
<keyword id="KW-1278">Translocase</keyword>
<keyword id="KW-0813">Transport</keyword>
<gene>
    <name evidence="1" type="primary">cysA</name>
    <name type="ordered locus">STM2441</name>
</gene>
<reference key="1">
    <citation type="journal article" date="2001" name="Nature">
        <title>Complete genome sequence of Salmonella enterica serovar Typhimurium LT2.</title>
        <authorList>
            <person name="McClelland M."/>
            <person name="Sanderson K.E."/>
            <person name="Spieth J."/>
            <person name="Clifton S.W."/>
            <person name="Latreille P."/>
            <person name="Courtney L."/>
            <person name="Porwollik S."/>
            <person name="Ali J."/>
            <person name="Dante M."/>
            <person name="Du F."/>
            <person name="Hou S."/>
            <person name="Layman D."/>
            <person name="Leonard S."/>
            <person name="Nguyen C."/>
            <person name="Scott K."/>
            <person name="Holmes A."/>
            <person name="Grewal N."/>
            <person name="Mulvaney E."/>
            <person name="Ryan E."/>
            <person name="Sun H."/>
            <person name="Florea L."/>
            <person name="Miller W."/>
            <person name="Stoneking T."/>
            <person name="Nhan M."/>
            <person name="Waterston R."/>
            <person name="Wilson R.K."/>
        </authorList>
    </citation>
    <scope>NUCLEOTIDE SEQUENCE [LARGE SCALE GENOMIC DNA]</scope>
    <source>
        <strain>LT2 / SGSC1412 / ATCC 700720</strain>
    </source>
</reference>
<reference key="2">
    <citation type="submission" date="1991-05" db="EMBL/GenBank/DDBJ databases">
        <authorList>
            <person name="Sivaprasad A.V."/>
            <person name="Kuczek E.S."/>
            <person name="Bawden C.S."/>
            <person name="Rogers G.E."/>
        </authorList>
    </citation>
    <scope>NUCLEOTIDE SEQUENCE [GENOMIC DNA] OF 248-365</scope>
    <source>
        <strain>LT2</strain>
    </source>
</reference>
<accession>P40860</accession>
<dbReference type="EC" id="7.3.2.3" evidence="1"/>
<dbReference type="EMBL" id="AE006468">
    <property type="protein sequence ID" value="AAL21335.1"/>
    <property type="molecule type" value="Genomic_DNA"/>
</dbReference>
<dbReference type="EMBL" id="X59595">
    <property type="status" value="NOT_ANNOTATED_CDS"/>
    <property type="molecule type" value="Genomic_DNA"/>
</dbReference>
<dbReference type="RefSeq" id="NP_461376.1">
    <property type="nucleotide sequence ID" value="NC_003197.2"/>
</dbReference>
<dbReference type="RefSeq" id="WP_000021076.1">
    <property type="nucleotide sequence ID" value="NC_003197.2"/>
</dbReference>
<dbReference type="SMR" id="P40860"/>
<dbReference type="STRING" id="99287.STM2441"/>
<dbReference type="PaxDb" id="99287-STM2441"/>
<dbReference type="GeneID" id="1253963"/>
<dbReference type="KEGG" id="stm:STM2441"/>
<dbReference type="PATRIC" id="fig|99287.12.peg.2579"/>
<dbReference type="HOGENOM" id="CLU_000604_1_1_6"/>
<dbReference type="OMA" id="AAFKHMT"/>
<dbReference type="PhylomeDB" id="P40860"/>
<dbReference type="BioCyc" id="SENT99287:STM2441-MONOMER"/>
<dbReference type="Proteomes" id="UP000001014">
    <property type="component" value="Chromosome"/>
</dbReference>
<dbReference type="GO" id="GO:0043190">
    <property type="term" value="C:ATP-binding cassette (ABC) transporter complex"/>
    <property type="evidence" value="ECO:0007669"/>
    <property type="project" value="InterPro"/>
</dbReference>
<dbReference type="GO" id="GO:0015419">
    <property type="term" value="F:ABC-type sulfate transporter activity"/>
    <property type="evidence" value="ECO:0007669"/>
    <property type="project" value="InterPro"/>
</dbReference>
<dbReference type="GO" id="GO:0102025">
    <property type="term" value="F:ABC-type thiosulfate transporter activity"/>
    <property type="evidence" value="ECO:0007669"/>
    <property type="project" value="RHEA"/>
</dbReference>
<dbReference type="GO" id="GO:0005524">
    <property type="term" value="F:ATP binding"/>
    <property type="evidence" value="ECO:0007669"/>
    <property type="project" value="UniProtKB-KW"/>
</dbReference>
<dbReference type="GO" id="GO:0016887">
    <property type="term" value="F:ATP hydrolysis activity"/>
    <property type="evidence" value="ECO:0007669"/>
    <property type="project" value="InterPro"/>
</dbReference>
<dbReference type="GO" id="GO:1902358">
    <property type="term" value="P:sulfate transmembrane transport"/>
    <property type="evidence" value="ECO:0000318"/>
    <property type="project" value="GO_Central"/>
</dbReference>
<dbReference type="FunFam" id="3.40.50.300:FF:000227">
    <property type="entry name" value="Sulfate/thiosulfate import ATP-binding protein CysA"/>
    <property type="match status" value="1"/>
</dbReference>
<dbReference type="Gene3D" id="3.40.50.300">
    <property type="entry name" value="P-loop containing nucleotide triphosphate hydrolases"/>
    <property type="match status" value="1"/>
</dbReference>
<dbReference type="InterPro" id="IPR003593">
    <property type="entry name" value="AAA+_ATPase"/>
</dbReference>
<dbReference type="InterPro" id="IPR050093">
    <property type="entry name" value="ABC_SmlMolc_Importer"/>
</dbReference>
<dbReference type="InterPro" id="IPR003439">
    <property type="entry name" value="ABC_transporter-like_ATP-bd"/>
</dbReference>
<dbReference type="InterPro" id="IPR017871">
    <property type="entry name" value="ABC_transporter-like_CS"/>
</dbReference>
<dbReference type="InterPro" id="IPR008995">
    <property type="entry name" value="Mo/tungstate-bd_C_term_dom"/>
</dbReference>
<dbReference type="InterPro" id="IPR027417">
    <property type="entry name" value="P-loop_NTPase"/>
</dbReference>
<dbReference type="InterPro" id="IPR005666">
    <property type="entry name" value="Sulph_transpt1"/>
</dbReference>
<dbReference type="NCBIfam" id="TIGR00968">
    <property type="entry name" value="3a0106s01"/>
    <property type="match status" value="1"/>
</dbReference>
<dbReference type="NCBIfam" id="NF008105">
    <property type="entry name" value="PRK10851.1"/>
    <property type="match status" value="1"/>
</dbReference>
<dbReference type="PANTHER" id="PTHR42781">
    <property type="entry name" value="SPERMIDINE/PUTRESCINE IMPORT ATP-BINDING PROTEIN POTA"/>
    <property type="match status" value="1"/>
</dbReference>
<dbReference type="PANTHER" id="PTHR42781:SF4">
    <property type="entry name" value="SPERMIDINE_PUTRESCINE IMPORT ATP-BINDING PROTEIN POTA"/>
    <property type="match status" value="1"/>
</dbReference>
<dbReference type="Pfam" id="PF00005">
    <property type="entry name" value="ABC_tran"/>
    <property type="match status" value="1"/>
</dbReference>
<dbReference type="SMART" id="SM00382">
    <property type="entry name" value="AAA"/>
    <property type="match status" value="1"/>
</dbReference>
<dbReference type="SUPFAM" id="SSF50331">
    <property type="entry name" value="MOP-like"/>
    <property type="match status" value="1"/>
</dbReference>
<dbReference type="SUPFAM" id="SSF52540">
    <property type="entry name" value="P-loop containing nucleoside triphosphate hydrolases"/>
    <property type="match status" value="1"/>
</dbReference>
<dbReference type="PROSITE" id="PS00211">
    <property type="entry name" value="ABC_TRANSPORTER_1"/>
    <property type="match status" value="1"/>
</dbReference>
<dbReference type="PROSITE" id="PS50893">
    <property type="entry name" value="ABC_TRANSPORTER_2"/>
    <property type="match status" value="1"/>
</dbReference>
<dbReference type="PROSITE" id="PS51237">
    <property type="entry name" value="CYSA"/>
    <property type="match status" value="1"/>
</dbReference>
<proteinExistence type="inferred from homology"/>
<name>CYSA_SALTY</name>
<feature type="chain" id="PRO_0000092291" description="Sulfate/thiosulfate import ATP-binding protein CysA">
    <location>
        <begin position="1"/>
        <end position="365"/>
    </location>
</feature>
<feature type="domain" description="ABC transporter" evidence="1">
    <location>
        <begin position="3"/>
        <end position="237"/>
    </location>
</feature>
<feature type="binding site" evidence="1">
    <location>
        <begin position="35"/>
        <end position="42"/>
    </location>
    <ligand>
        <name>ATP</name>
        <dbReference type="ChEBI" id="CHEBI:30616"/>
    </ligand>
</feature>
<feature type="sequence conflict" description="In Ref. 2; X59595." evidence="2" ref="2">
    <original>EASPKG</original>
    <variation>SQPES</variation>
    <location>
        <begin position="298"/>
        <end position="303"/>
    </location>
</feature>
<evidence type="ECO:0000255" key="1">
    <source>
        <dbReference type="HAMAP-Rule" id="MF_01701"/>
    </source>
</evidence>
<evidence type="ECO:0000305" key="2"/>